<feature type="chain" id="PRO_0000060446" description="tRNA (guanine-N(1)-)-methyltransferase">
    <location>
        <begin position="1"/>
        <end position="234"/>
    </location>
</feature>
<feature type="binding site" evidence="1">
    <location>
        <position position="115"/>
    </location>
    <ligand>
        <name>S-adenosyl-L-methionine</name>
        <dbReference type="ChEBI" id="CHEBI:59789"/>
    </ligand>
</feature>
<feature type="binding site" evidence="1">
    <location>
        <begin position="135"/>
        <end position="140"/>
    </location>
    <ligand>
        <name>S-adenosyl-L-methionine</name>
        <dbReference type="ChEBI" id="CHEBI:59789"/>
    </ligand>
</feature>
<sequence>MSILHVTILTVFPEMFPGTLGYSLAGQALHNNIWSYDIINIRDFGLTKHKNVDDKAYGGGDGLIMRPDVLGNVIEYALSLNHNTKIYYPSPRGSVFTQSFAKEMLKNKNIIFLCGRYEGIDERVIAEYNVKEISVGDYILSGGEIPTLTILDCLIRLLPGVLINQNTLSSESFEKDGEFQGGLECDLYTRPKIWHGRAVPSILLSGNRKLINNWRKEQSRMITKLRRPELLKDL</sequence>
<comment type="function">
    <text evidence="1">Specifically methylates guanosine-37 in various tRNAs.</text>
</comment>
<comment type="catalytic activity">
    <reaction evidence="1">
        <text>guanosine(37) in tRNA + S-adenosyl-L-methionine = N(1)-methylguanosine(37) in tRNA + S-adenosyl-L-homocysteine + H(+)</text>
        <dbReference type="Rhea" id="RHEA:36899"/>
        <dbReference type="Rhea" id="RHEA-COMP:10145"/>
        <dbReference type="Rhea" id="RHEA-COMP:10147"/>
        <dbReference type="ChEBI" id="CHEBI:15378"/>
        <dbReference type="ChEBI" id="CHEBI:57856"/>
        <dbReference type="ChEBI" id="CHEBI:59789"/>
        <dbReference type="ChEBI" id="CHEBI:73542"/>
        <dbReference type="ChEBI" id="CHEBI:74269"/>
        <dbReference type="EC" id="2.1.1.228"/>
    </reaction>
</comment>
<comment type="subunit">
    <text evidence="1">Homodimer.</text>
</comment>
<comment type="subcellular location">
    <subcellularLocation>
        <location evidence="1">Cytoplasm</location>
    </subcellularLocation>
</comment>
<comment type="similarity">
    <text evidence="1">Belongs to the RNA methyltransferase TrmD family.</text>
</comment>
<organism>
    <name type="scientific">Rickettsia typhi (strain ATCC VR-144 / Wilmington)</name>
    <dbReference type="NCBI Taxonomy" id="257363"/>
    <lineage>
        <taxon>Bacteria</taxon>
        <taxon>Pseudomonadati</taxon>
        <taxon>Pseudomonadota</taxon>
        <taxon>Alphaproteobacteria</taxon>
        <taxon>Rickettsiales</taxon>
        <taxon>Rickettsiaceae</taxon>
        <taxon>Rickettsieae</taxon>
        <taxon>Rickettsia</taxon>
        <taxon>typhus group</taxon>
    </lineage>
</organism>
<accession>Q68XX9</accession>
<dbReference type="EC" id="2.1.1.228" evidence="1"/>
<dbReference type="EMBL" id="AE017197">
    <property type="protein sequence ID" value="AAU03513.1"/>
    <property type="molecule type" value="Genomic_DNA"/>
</dbReference>
<dbReference type="RefSeq" id="WP_011190500.1">
    <property type="nucleotide sequence ID" value="NC_006142.1"/>
</dbReference>
<dbReference type="SMR" id="Q68XX9"/>
<dbReference type="KEGG" id="rty:RT0025"/>
<dbReference type="eggNOG" id="COG0336">
    <property type="taxonomic scope" value="Bacteria"/>
</dbReference>
<dbReference type="HOGENOM" id="CLU_047363_0_1_5"/>
<dbReference type="OrthoDB" id="9807416at2"/>
<dbReference type="Proteomes" id="UP000000604">
    <property type="component" value="Chromosome"/>
</dbReference>
<dbReference type="GO" id="GO:0005829">
    <property type="term" value="C:cytosol"/>
    <property type="evidence" value="ECO:0007669"/>
    <property type="project" value="TreeGrafter"/>
</dbReference>
<dbReference type="GO" id="GO:0052906">
    <property type="term" value="F:tRNA (guanine(37)-N1)-methyltransferase activity"/>
    <property type="evidence" value="ECO:0007669"/>
    <property type="project" value="UniProtKB-UniRule"/>
</dbReference>
<dbReference type="GO" id="GO:0002939">
    <property type="term" value="P:tRNA N1-guanine methylation"/>
    <property type="evidence" value="ECO:0007669"/>
    <property type="project" value="TreeGrafter"/>
</dbReference>
<dbReference type="CDD" id="cd18080">
    <property type="entry name" value="TrmD-like"/>
    <property type="match status" value="1"/>
</dbReference>
<dbReference type="Gene3D" id="3.40.1280.10">
    <property type="match status" value="1"/>
</dbReference>
<dbReference type="Gene3D" id="1.10.1270.20">
    <property type="entry name" value="tRNA(m1g37)methyltransferase, domain 2"/>
    <property type="match status" value="1"/>
</dbReference>
<dbReference type="HAMAP" id="MF_00605">
    <property type="entry name" value="TrmD"/>
    <property type="match status" value="1"/>
</dbReference>
<dbReference type="InterPro" id="IPR029028">
    <property type="entry name" value="Alpha/beta_knot_MTases"/>
</dbReference>
<dbReference type="InterPro" id="IPR023148">
    <property type="entry name" value="tRNA_m1G_MeTrfase_C_sf"/>
</dbReference>
<dbReference type="InterPro" id="IPR002649">
    <property type="entry name" value="tRNA_m1G_MeTrfase_TrmD"/>
</dbReference>
<dbReference type="InterPro" id="IPR029026">
    <property type="entry name" value="tRNA_m1G_MTases_N"/>
</dbReference>
<dbReference type="InterPro" id="IPR016009">
    <property type="entry name" value="tRNA_MeTrfase_TRMD/TRM10"/>
</dbReference>
<dbReference type="NCBIfam" id="NF000648">
    <property type="entry name" value="PRK00026.1"/>
    <property type="match status" value="1"/>
</dbReference>
<dbReference type="NCBIfam" id="TIGR00088">
    <property type="entry name" value="trmD"/>
    <property type="match status" value="1"/>
</dbReference>
<dbReference type="PANTHER" id="PTHR46417">
    <property type="entry name" value="TRNA (GUANINE-N(1)-)-METHYLTRANSFERASE"/>
    <property type="match status" value="1"/>
</dbReference>
<dbReference type="PANTHER" id="PTHR46417:SF1">
    <property type="entry name" value="TRNA (GUANINE-N(1)-)-METHYLTRANSFERASE"/>
    <property type="match status" value="1"/>
</dbReference>
<dbReference type="Pfam" id="PF01746">
    <property type="entry name" value="tRNA_m1G_MT"/>
    <property type="match status" value="1"/>
</dbReference>
<dbReference type="PIRSF" id="PIRSF000386">
    <property type="entry name" value="tRNA_mtase"/>
    <property type="match status" value="1"/>
</dbReference>
<dbReference type="SUPFAM" id="SSF75217">
    <property type="entry name" value="alpha/beta knot"/>
    <property type="match status" value="1"/>
</dbReference>
<gene>
    <name evidence="1" type="primary">trmD</name>
    <name type="ordered locus">RT0025</name>
</gene>
<name>TRMD_RICTY</name>
<keyword id="KW-0963">Cytoplasm</keyword>
<keyword id="KW-0489">Methyltransferase</keyword>
<keyword id="KW-0949">S-adenosyl-L-methionine</keyword>
<keyword id="KW-0808">Transferase</keyword>
<keyword id="KW-0819">tRNA processing</keyword>
<proteinExistence type="inferred from homology"/>
<reference key="1">
    <citation type="journal article" date="2004" name="J. Bacteriol.">
        <title>Complete genome sequence of Rickettsia typhi and comparison with sequences of other Rickettsiae.</title>
        <authorList>
            <person name="McLeod M.P."/>
            <person name="Qin X."/>
            <person name="Karpathy S.E."/>
            <person name="Gioia J."/>
            <person name="Highlander S.K."/>
            <person name="Fox G.E."/>
            <person name="McNeill T.Z."/>
            <person name="Jiang H."/>
            <person name="Muzny D."/>
            <person name="Jacob L.S."/>
            <person name="Hawes A.C."/>
            <person name="Sodergren E."/>
            <person name="Gill R."/>
            <person name="Hume J."/>
            <person name="Morgan M."/>
            <person name="Fan G."/>
            <person name="Amin A.G."/>
            <person name="Gibbs R.A."/>
            <person name="Hong C."/>
            <person name="Yu X.-J."/>
            <person name="Walker D.H."/>
            <person name="Weinstock G.M."/>
        </authorList>
    </citation>
    <scope>NUCLEOTIDE SEQUENCE [LARGE SCALE GENOMIC DNA]</scope>
    <source>
        <strain>ATCC VR-144 / Wilmington</strain>
    </source>
</reference>
<protein>
    <recommendedName>
        <fullName evidence="1">tRNA (guanine-N(1)-)-methyltransferase</fullName>
        <ecNumber evidence="1">2.1.1.228</ecNumber>
    </recommendedName>
    <alternativeName>
        <fullName evidence="1">M1G-methyltransferase</fullName>
    </alternativeName>
    <alternativeName>
        <fullName evidence="1">tRNA [GM37] methyltransferase</fullName>
    </alternativeName>
</protein>
<evidence type="ECO:0000255" key="1">
    <source>
        <dbReference type="HAMAP-Rule" id="MF_00605"/>
    </source>
</evidence>